<accession>Q1KXQ5</accession>
<evidence type="ECO:0000255" key="1">
    <source>
        <dbReference type="HAMAP-Rule" id="MF_01456"/>
    </source>
</evidence>
<geneLocation type="chloroplast"/>
<reference key="1">
    <citation type="submission" date="2006-01" db="EMBL/GenBank/DDBJ databases">
        <title>A comparison of the first two published chloroplast genomes in Asteraceae: Lactuca and Helianthus.</title>
        <authorList>
            <person name="Timme R.E."/>
            <person name="Kuehl J.V."/>
            <person name="Boore J.L."/>
            <person name="Jansen R.K."/>
        </authorList>
    </citation>
    <scope>NUCLEOTIDE SEQUENCE [LARGE SCALE GENOMIC DNA]</scope>
    <source>
        <strain>cv. HA383</strain>
    </source>
</reference>
<gene>
    <name evidence="1" type="primary">ndhE</name>
</gene>
<name>NU4LC_HELAN</name>
<proteinExistence type="inferred from homology"/>
<keyword id="KW-0150">Chloroplast</keyword>
<keyword id="KW-0472">Membrane</keyword>
<keyword id="KW-0520">NAD</keyword>
<keyword id="KW-0521">NADP</keyword>
<keyword id="KW-0934">Plastid</keyword>
<keyword id="KW-0618">Plastoquinone</keyword>
<keyword id="KW-0874">Quinone</keyword>
<keyword id="KW-0793">Thylakoid</keyword>
<keyword id="KW-1278">Translocase</keyword>
<keyword id="KW-0812">Transmembrane</keyword>
<keyword id="KW-1133">Transmembrane helix</keyword>
<keyword id="KW-0813">Transport</keyword>
<protein>
    <recommendedName>
        <fullName evidence="1">NAD(P)H-quinone oxidoreductase subunit 4L, chloroplastic</fullName>
        <ecNumber evidence="1">7.1.1.-</ecNumber>
    </recommendedName>
    <alternativeName>
        <fullName evidence="1">NAD(P)H dehydrogenase subunit 4L</fullName>
    </alternativeName>
    <alternativeName>
        <fullName evidence="1">NADH-plastoquinone oxidoreductase subunit 4L</fullName>
    </alternativeName>
</protein>
<dbReference type="EC" id="7.1.1.-" evidence="1"/>
<dbReference type="EMBL" id="DQ383815">
    <property type="protein sequence ID" value="ABD47199.1"/>
    <property type="molecule type" value="Genomic_DNA"/>
</dbReference>
<dbReference type="RefSeq" id="YP_588171.1">
    <property type="nucleotide sequence ID" value="NC_007977.1"/>
</dbReference>
<dbReference type="SMR" id="Q1KXQ5"/>
<dbReference type="GeneID" id="4055625"/>
<dbReference type="KEGG" id="han:4055625"/>
<dbReference type="OrthoDB" id="1925110at2759"/>
<dbReference type="PhylomeDB" id="Q1KXQ5"/>
<dbReference type="GO" id="GO:0009535">
    <property type="term" value="C:chloroplast thylakoid membrane"/>
    <property type="evidence" value="ECO:0007669"/>
    <property type="project" value="UniProtKB-SubCell"/>
</dbReference>
<dbReference type="GO" id="GO:0016655">
    <property type="term" value="F:oxidoreductase activity, acting on NAD(P)H, quinone or similar compound as acceptor"/>
    <property type="evidence" value="ECO:0007669"/>
    <property type="project" value="UniProtKB-UniRule"/>
</dbReference>
<dbReference type="GO" id="GO:0048038">
    <property type="term" value="F:quinone binding"/>
    <property type="evidence" value="ECO:0007669"/>
    <property type="project" value="UniProtKB-KW"/>
</dbReference>
<dbReference type="GO" id="GO:0042773">
    <property type="term" value="P:ATP synthesis coupled electron transport"/>
    <property type="evidence" value="ECO:0007669"/>
    <property type="project" value="InterPro"/>
</dbReference>
<dbReference type="GO" id="GO:0019684">
    <property type="term" value="P:photosynthesis, light reaction"/>
    <property type="evidence" value="ECO:0007669"/>
    <property type="project" value="UniProtKB-UniRule"/>
</dbReference>
<dbReference type="FunFam" id="1.10.287.3510:FF:000001">
    <property type="entry name" value="NADH-quinone oxidoreductase subunit K"/>
    <property type="match status" value="1"/>
</dbReference>
<dbReference type="Gene3D" id="1.10.287.3510">
    <property type="match status" value="1"/>
</dbReference>
<dbReference type="HAMAP" id="MF_01456">
    <property type="entry name" value="NDH1_NuoK"/>
    <property type="match status" value="1"/>
</dbReference>
<dbReference type="InterPro" id="IPR001133">
    <property type="entry name" value="NADH_UbQ_OxRdtase_chain4L/K"/>
</dbReference>
<dbReference type="InterPro" id="IPR039428">
    <property type="entry name" value="NUOK/Mnh_C1-like"/>
</dbReference>
<dbReference type="NCBIfam" id="NF004320">
    <property type="entry name" value="PRK05715.1-2"/>
    <property type="match status" value="1"/>
</dbReference>
<dbReference type="NCBIfam" id="NF004322">
    <property type="entry name" value="PRK05715.1-4"/>
    <property type="match status" value="1"/>
</dbReference>
<dbReference type="NCBIfam" id="NF004323">
    <property type="entry name" value="PRK05715.1-5"/>
    <property type="match status" value="1"/>
</dbReference>
<dbReference type="PANTHER" id="PTHR11434:SF16">
    <property type="entry name" value="NADH-UBIQUINONE OXIDOREDUCTASE CHAIN 4L"/>
    <property type="match status" value="1"/>
</dbReference>
<dbReference type="PANTHER" id="PTHR11434">
    <property type="entry name" value="NADH-UBIQUINONE OXIDOREDUCTASE SUBUNIT ND4L"/>
    <property type="match status" value="1"/>
</dbReference>
<dbReference type="Pfam" id="PF00420">
    <property type="entry name" value="Oxidored_q2"/>
    <property type="match status" value="1"/>
</dbReference>
<feature type="chain" id="PRO_0000360333" description="NAD(P)H-quinone oxidoreductase subunit 4L, chloroplastic">
    <location>
        <begin position="1"/>
        <end position="101"/>
    </location>
</feature>
<feature type="transmembrane region" description="Helical" evidence="1">
    <location>
        <begin position="2"/>
        <end position="22"/>
    </location>
</feature>
<feature type="transmembrane region" description="Helical" evidence="1">
    <location>
        <begin position="32"/>
        <end position="52"/>
    </location>
</feature>
<feature type="transmembrane region" description="Helical" evidence="1">
    <location>
        <begin position="61"/>
        <end position="81"/>
    </location>
</feature>
<comment type="function">
    <text evidence="1">NDH shuttles electrons from NAD(P)H:plastoquinone, via FMN and iron-sulfur (Fe-S) centers, to quinones in the photosynthetic chain and possibly in a chloroplast respiratory chain. The immediate electron acceptor for the enzyme in this species is believed to be plastoquinone. Couples the redox reaction to proton translocation, and thus conserves the redox energy in a proton gradient.</text>
</comment>
<comment type="catalytic activity">
    <reaction evidence="1">
        <text>a plastoquinone + NADH + (n+1) H(+)(in) = a plastoquinol + NAD(+) + n H(+)(out)</text>
        <dbReference type="Rhea" id="RHEA:42608"/>
        <dbReference type="Rhea" id="RHEA-COMP:9561"/>
        <dbReference type="Rhea" id="RHEA-COMP:9562"/>
        <dbReference type="ChEBI" id="CHEBI:15378"/>
        <dbReference type="ChEBI" id="CHEBI:17757"/>
        <dbReference type="ChEBI" id="CHEBI:57540"/>
        <dbReference type="ChEBI" id="CHEBI:57945"/>
        <dbReference type="ChEBI" id="CHEBI:62192"/>
    </reaction>
</comment>
<comment type="catalytic activity">
    <reaction evidence="1">
        <text>a plastoquinone + NADPH + (n+1) H(+)(in) = a plastoquinol + NADP(+) + n H(+)(out)</text>
        <dbReference type="Rhea" id="RHEA:42612"/>
        <dbReference type="Rhea" id="RHEA-COMP:9561"/>
        <dbReference type="Rhea" id="RHEA-COMP:9562"/>
        <dbReference type="ChEBI" id="CHEBI:15378"/>
        <dbReference type="ChEBI" id="CHEBI:17757"/>
        <dbReference type="ChEBI" id="CHEBI:57783"/>
        <dbReference type="ChEBI" id="CHEBI:58349"/>
        <dbReference type="ChEBI" id="CHEBI:62192"/>
    </reaction>
</comment>
<comment type="subunit">
    <text evidence="1">NDH is composed of at least 16 different subunits, 5 of which are encoded in the nucleus.</text>
</comment>
<comment type="subcellular location">
    <subcellularLocation>
        <location evidence="1">Plastid</location>
        <location evidence="1">Chloroplast thylakoid membrane</location>
        <topology evidence="1">Multi-pass membrane protein</topology>
    </subcellularLocation>
</comment>
<comment type="similarity">
    <text evidence="1">Belongs to the complex I subunit 4L family.</text>
</comment>
<sequence length="101" mass="11217">MMLEHVLVLSAYLFSVGLYGLITSRNMVRALMCLELILNAVNLNFVTFSDFFDSRQLKGAIFSIFVIAIAAAEAAIGLAIVSSIYRNRKSTRINQSNLLNK</sequence>
<organism>
    <name type="scientific">Helianthus annuus</name>
    <name type="common">Common sunflower</name>
    <dbReference type="NCBI Taxonomy" id="4232"/>
    <lineage>
        <taxon>Eukaryota</taxon>
        <taxon>Viridiplantae</taxon>
        <taxon>Streptophyta</taxon>
        <taxon>Embryophyta</taxon>
        <taxon>Tracheophyta</taxon>
        <taxon>Spermatophyta</taxon>
        <taxon>Magnoliopsida</taxon>
        <taxon>eudicotyledons</taxon>
        <taxon>Gunneridae</taxon>
        <taxon>Pentapetalae</taxon>
        <taxon>asterids</taxon>
        <taxon>campanulids</taxon>
        <taxon>Asterales</taxon>
        <taxon>Asteraceae</taxon>
        <taxon>Asteroideae</taxon>
        <taxon>Heliantheae alliance</taxon>
        <taxon>Heliantheae</taxon>
        <taxon>Helianthus</taxon>
    </lineage>
</organism>